<proteinExistence type="inferred from homology"/>
<protein>
    <recommendedName>
        <fullName evidence="2">23S rRNA (uracil(1939)-C(5))-methyltransferase RlmD</fullName>
        <ecNumber evidence="2">2.1.1.190</ecNumber>
    </recommendedName>
    <alternativeName>
        <fullName evidence="2">23S rRNA(m5U1939)-methyltransferase</fullName>
    </alternativeName>
</protein>
<feature type="initiator methionine" description="Removed" evidence="1">
    <location>
        <position position="1"/>
    </location>
</feature>
<feature type="chain" id="PRO_0000161895" description="23S rRNA (uracil(1939)-C(5))-methyltransferase RlmD">
    <location>
        <begin position="2"/>
        <end position="433"/>
    </location>
</feature>
<feature type="domain" description="TRAM" evidence="2">
    <location>
        <begin position="10"/>
        <end position="68"/>
    </location>
</feature>
<feature type="active site" description="Nucleophile" evidence="2">
    <location>
        <position position="389"/>
    </location>
</feature>
<feature type="binding site" evidence="2">
    <location>
        <position position="81"/>
    </location>
    <ligand>
        <name>[4Fe-4S] cluster</name>
        <dbReference type="ChEBI" id="CHEBI:49883"/>
    </ligand>
</feature>
<feature type="binding site" evidence="2">
    <location>
        <position position="87"/>
    </location>
    <ligand>
        <name>[4Fe-4S] cluster</name>
        <dbReference type="ChEBI" id="CHEBI:49883"/>
    </ligand>
</feature>
<feature type="binding site" evidence="2">
    <location>
        <position position="90"/>
    </location>
    <ligand>
        <name>[4Fe-4S] cluster</name>
        <dbReference type="ChEBI" id="CHEBI:49883"/>
    </ligand>
</feature>
<feature type="binding site" evidence="2">
    <location>
        <position position="162"/>
    </location>
    <ligand>
        <name>[4Fe-4S] cluster</name>
        <dbReference type="ChEBI" id="CHEBI:49883"/>
    </ligand>
</feature>
<feature type="binding site" evidence="2">
    <location>
        <position position="265"/>
    </location>
    <ligand>
        <name>S-adenosyl-L-methionine</name>
        <dbReference type="ChEBI" id="CHEBI:59789"/>
    </ligand>
</feature>
<feature type="binding site" evidence="2">
    <location>
        <position position="294"/>
    </location>
    <ligand>
        <name>S-adenosyl-L-methionine</name>
        <dbReference type="ChEBI" id="CHEBI:59789"/>
    </ligand>
</feature>
<feature type="binding site" evidence="2">
    <location>
        <position position="299"/>
    </location>
    <ligand>
        <name>S-adenosyl-L-methionine</name>
        <dbReference type="ChEBI" id="CHEBI:59789"/>
    </ligand>
</feature>
<feature type="binding site" evidence="2">
    <location>
        <position position="315"/>
    </location>
    <ligand>
        <name>S-adenosyl-L-methionine</name>
        <dbReference type="ChEBI" id="CHEBI:59789"/>
    </ligand>
</feature>
<feature type="binding site" evidence="2">
    <location>
        <position position="342"/>
    </location>
    <ligand>
        <name>S-adenosyl-L-methionine</name>
        <dbReference type="ChEBI" id="CHEBI:59789"/>
    </ligand>
</feature>
<feature type="binding site" evidence="2">
    <location>
        <position position="363"/>
    </location>
    <ligand>
        <name>S-adenosyl-L-methionine</name>
        <dbReference type="ChEBI" id="CHEBI:59789"/>
    </ligand>
</feature>
<name>RLMD_ECO57</name>
<organism>
    <name type="scientific">Escherichia coli O157:H7</name>
    <dbReference type="NCBI Taxonomy" id="83334"/>
    <lineage>
        <taxon>Bacteria</taxon>
        <taxon>Pseudomonadati</taxon>
        <taxon>Pseudomonadota</taxon>
        <taxon>Gammaproteobacteria</taxon>
        <taxon>Enterobacterales</taxon>
        <taxon>Enterobacteriaceae</taxon>
        <taxon>Escherichia</taxon>
    </lineage>
</organism>
<comment type="function">
    <text evidence="2">Catalyzes the formation of 5-methyl-uridine at position 1939 (m5U1939) in 23S rRNA.</text>
</comment>
<comment type="catalytic activity">
    <reaction evidence="2">
        <text>uridine(1939) in 23S rRNA + S-adenosyl-L-methionine = 5-methyluridine(1939) in 23S rRNA + S-adenosyl-L-homocysteine + H(+)</text>
        <dbReference type="Rhea" id="RHEA:42908"/>
        <dbReference type="Rhea" id="RHEA-COMP:10278"/>
        <dbReference type="Rhea" id="RHEA-COMP:10279"/>
        <dbReference type="ChEBI" id="CHEBI:15378"/>
        <dbReference type="ChEBI" id="CHEBI:57856"/>
        <dbReference type="ChEBI" id="CHEBI:59789"/>
        <dbReference type="ChEBI" id="CHEBI:65315"/>
        <dbReference type="ChEBI" id="CHEBI:74447"/>
        <dbReference type="EC" id="2.1.1.190"/>
    </reaction>
</comment>
<comment type="similarity">
    <text evidence="2">Belongs to the class I-like SAM-binding methyltransferase superfamily. RNA M5U methyltransferase family. RlmD subfamily.</text>
</comment>
<keyword id="KW-0004">4Fe-4S</keyword>
<keyword id="KW-0408">Iron</keyword>
<keyword id="KW-0411">Iron-sulfur</keyword>
<keyword id="KW-0479">Metal-binding</keyword>
<keyword id="KW-0489">Methyltransferase</keyword>
<keyword id="KW-1185">Reference proteome</keyword>
<keyword id="KW-0698">rRNA processing</keyword>
<keyword id="KW-0949">S-adenosyl-L-methionine</keyword>
<keyword id="KW-0808">Transferase</keyword>
<dbReference type="EC" id="2.1.1.190" evidence="2"/>
<dbReference type="EMBL" id="AE005174">
    <property type="protein sequence ID" value="AAG57898.1"/>
    <property type="molecule type" value="Genomic_DNA"/>
</dbReference>
<dbReference type="EMBL" id="BA000007">
    <property type="protein sequence ID" value="BAB37068.2"/>
    <property type="molecule type" value="Genomic_DNA"/>
</dbReference>
<dbReference type="PIR" id="E91084">
    <property type="entry name" value="E91084"/>
</dbReference>
<dbReference type="PIR" id="F85929">
    <property type="entry name" value="F85929"/>
</dbReference>
<dbReference type="RefSeq" id="NP_311672.1">
    <property type="nucleotide sequence ID" value="NC_002695.1"/>
</dbReference>
<dbReference type="RefSeq" id="WP_000046824.1">
    <property type="nucleotide sequence ID" value="NZ_VOAI01000003.1"/>
</dbReference>
<dbReference type="SMR" id="Q8XED8"/>
<dbReference type="STRING" id="155864.Z4100"/>
<dbReference type="GeneID" id="916557"/>
<dbReference type="KEGG" id="ece:Z4100"/>
<dbReference type="KEGG" id="ecs:ECs_3645"/>
<dbReference type="PATRIC" id="fig|386585.9.peg.3809"/>
<dbReference type="eggNOG" id="COG2265">
    <property type="taxonomic scope" value="Bacteria"/>
</dbReference>
<dbReference type="HOGENOM" id="CLU_014689_8_2_6"/>
<dbReference type="OMA" id="GGCKWQH"/>
<dbReference type="Proteomes" id="UP000000558">
    <property type="component" value="Chromosome"/>
</dbReference>
<dbReference type="Proteomes" id="UP000002519">
    <property type="component" value="Chromosome"/>
</dbReference>
<dbReference type="GO" id="GO:0051539">
    <property type="term" value="F:4 iron, 4 sulfur cluster binding"/>
    <property type="evidence" value="ECO:0007669"/>
    <property type="project" value="UniProtKB-KW"/>
</dbReference>
<dbReference type="GO" id="GO:0005506">
    <property type="term" value="F:iron ion binding"/>
    <property type="evidence" value="ECO:0007669"/>
    <property type="project" value="UniProtKB-UniRule"/>
</dbReference>
<dbReference type="GO" id="GO:0003723">
    <property type="term" value="F:RNA binding"/>
    <property type="evidence" value="ECO:0007669"/>
    <property type="project" value="InterPro"/>
</dbReference>
<dbReference type="GO" id="GO:0070041">
    <property type="term" value="F:rRNA (uridine-C5-)-methyltransferase activity"/>
    <property type="evidence" value="ECO:0007669"/>
    <property type="project" value="UniProtKB-UniRule"/>
</dbReference>
<dbReference type="GO" id="GO:0070475">
    <property type="term" value="P:rRNA base methylation"/>
    <property type="evidence" value="ECO:0007669"/>
    <property type="project" value="TreeGrafter"/>
</dbReference>
<dbReference type="CDD" id="cd02440">
    <property type="entry name" value="AdoMet_MTases"/>
    <property type="match status" value="1"/>
</dbReference>
<dbReference type="FunFam" id="3.40.50.150:FF:000009">
    <property type="entry name" value="23S rRNA (Uracil(1939)-C(5))-methyltransferase RlmD"/>
    <property type="match status" value="1"/>
</dbReference>
<dbReference type="FunFam" id="2.40.50.1070:FF:000004">
    <property type="entry name" value="23S rRNA (uracil(1939)-C(5))-methyltransferase RlmD"/>
    <property type="match status" value="1"/>
</dbReference>
<dbReference type="FunFam" id="2.40.50.140:FF:000097">
    <property type="entry name" value="23S rRNA (uracil(1939)-C(5))-methyltransferase RlmD"/>
    <property type="match status" value="1"/>
</dbReference>
<dbReference type="Gene3D" id="2.40.50.1070">
    <property type="match status" value="1"/>
</dbReference>
<dbReference type="Gene3D" id="2.40.50.140">
    <property type="entry name" value="Nucleic acid-binding proteins"/>
    <property type="match status" value="1"/>
</dbReference>
<dbReference type="Gene3D" id="3.40.50.150">
    <property type="entry name" value="Vaccinia Virus protein VP39"/>
    <property type="match status" value="1"/>
</dbReference>
<dbReference type="HAMAP" id="MF_01010">
    <property type="entry name" value="23SrRNA_methyltr_RlmD"/>
    <property type="match status" value="1"/>
</dbReference>
<dbReference type="InterPro" id="IPR001566">
    <property type="entry name" value="23S_rRNA_MeTrfase_RlmD"/>
</dbReference>
<dbReference type="InterPro" id="IPR030390">
    <property type="entry name" value="MeTrfase_TrmA_AS"/>
</dbReference>
<dbReference type="InterPro" id="IPR030391">
    <property type="entry name" value="MeTrfase_TrmA_CS"/>
</dbReference>
<dbReference type="InterPro" id="IPR012340">
    <property type="entry name" value="NA-bd_OB-fold"/>
</dbReference>
<dbReference type="InterPro" id="IPR029063">
    <property type="entry name" value="SAM-dependent_MTases_sf"/>
</dbReference>
<dbReference type="InterPro" id="IPR002792">
    <property type="entry name" value="TRAM_dom"/>
</dbReference>
<dbReference type="InterPro" id="IPR010280">
    <property type="entry name" value="U5_MeTrfase_fam"/>
</dbReference>
<dbReference type="NCBIfam" id="NF009639">
    <property type="entry name" value="PRK13168.1"/>
    <property type="match status" value="1"/>
</dbReference>
<dbReference type="NCBIfam" id="TIGR00479">
    <property type="entry name" value="rumA"/>
    <property type="match status" value="1"/>
</dbReference>
<dbReference type="PANTHER" id="PTHR11061:SF49">
    <property type="entry name" value="23S RRNA (URACIL(1939)-C(5))-METHYLTRANSFERASE RLMD"/>
    <property type="match status" value="1"/>
</dbReference>
<dbReference type="PANTHER" id="PTHR11061">
    <property type="entry name" value="RNA M5U METHYLTRANSFERASE"/>
    <property type="match status" value="1"/>
</dbReference>
<dbReference type="Pfam" id="PF01938">
    <property type="entry name" value="TRAM"/>
    <property type="match status" value="1"/>
</dbReference>
<dbReference type="Pfam" id="PF05958">
    <property type="entry name" value="tRNA_U5-meth_tr"/>
    <property type="match status" value="1"/>
</dbReference>
<dbReference type="SUPFAM" id="SSF50249">
    <property type="entry name" value="Nucleic acid-binding proteins"/>
    <property type="match status" value="1"/>
</dbReference>
<dbReference type="SUPFAM" id="SSF53335">
    <property type="entry name" value="S-adenosyl-L-methionine-dependent methyltransferases"/>
    <property type="match status" value="1"/>
</dbReference>
<dbReference type="PROSITE" id="PS51687">
    <property type="entry name" value="SAM_MT_RNA_M5U"/>
    <property type="match status" value="1"/>
</dbReference>
<dbReference type="PROSITE" id="PS50926">
    <property type="entry name" value="TRAM"/>
    <property type="match status" value="1"/>
</dbReference>
<dbReference type="PROSITE" id="PS01230">
    <property type="entry name" value="TRMA_1"/>
    <property type="match status" value="1"/>
</dbReference>
<dbReference type="PROSITE" id="PS01231">
    <property type="entry name" value="TRMA_2"/>
    <property type="match status" value="1"/>
</dbReference>
<accession>Q8XED8</accession>
<sequence length="433" mass="48155">MAQFYSAKRRTTTRQIITVSVNDLDSFGQGVARHNGKTLFIPGLLPQENAEVTVTEDKKQYARAKVVRRLSDSPERETPRCPHFGVCGGCQQQHASVDLQQRSKSAALARLMKHEVSEVIADVPWGYRRRARLSLNYLPKTQQLQMGFRKAGSSDIVDVKQCPILVPQLEALLPKVRACLGSLQAMRHLGHVELVQATSGTLMILRHTAPLSSADREKLERFSHSEGLDLYLAPDSEILETVSGEMPWYDSNGLRLTFSPRDFIQVNAGVNQKMVARALEWLEVEPEDRVLDLFCGMGNFTLPLATQAASVVGVEGVPALVEKGQQNARLNCLQNVTFYHENLEEDVTKQPWAKNGFDKVLLDPARAGAAGVMQQIIKLEPIRIVYVSCNPATLARDSEALLKAGYTIARLAMLDMFPHTGHLESMVLFSRVK</sequence>
<reference key="1">
    <citation type="journal article" date="2001" name="Nature">
        <title>Genome sequence of enterohaemorrhagic Escherichia coli O157:H7.</title>
        <authorList>
            <person name="Perna N.T."/>
            <person name="Plunkett G. III"/>
            <person name="Burland V."/>
            <person name="Mau B."/>
            <person name="Glasner J.D."/>
            <person name="Rose D.J."/>
            <person name="Mayhew G.F."/>
            <person name="Evans P.S."/>
            <person name="Gregor J."/>
            <person name="Kirkpatrick H.A."/>
            <person name="Posfai G."/>
            <person name="Hackett J."/>
            <person name="Klink S."/>
            <person name="Boutin A."/>
            <person name="Shao Y."/>
            <person name="Miller L."/>
            <person name="Grotbeck E.J."/>
            <person name="Davis N.W."/>
            <person name="Lim A."/>
            <person name="Dimalanta E.T."/>
            <person name="Potamousis K."/>
            <person name="Apodaca J."/>
            <person name="Anantharaman T.S."/>
            <person name="Lin J."/>
            <person name="Yen G."/>
            <person name="Schwartz D.C."/>
            <person name="Welch R.A."/>
            <person name="Blattner F.R."/>
        </authorList>
    </citation>
    <scope>NUCLEOTIDE SEQUENCE [LARGE SCALE GENOMIC DNA]</scope>
    <source>
        <strain>O157:H7 / EDL933 / ATCC 700927 / EHEC</strain>
    </source>
</reference>
<reference key="2">
    <citation type="journal article" date="2001" name="DNA Res.">
        <title>Complete genome sequence of enterohemorrhagic Escherichia coli O157:H7 and genomic comparison with a laboratory strain K-12.</title>
        <authorList>
            <person name="Hayashi T."/>
            <person name="Makino K."/>
            <person name="Ohnishi M."/>
            <person name="Kurokawa K."/>
            <person name="Ishii K."/>
            <person name="Yokoyama K."/>
            <person name="Han C.-G."/>
            <person name="Ohtsubo E."/>
            <person name="Nakayama K."/>
            <person name="Murata T."/>
            <person name="Tanaka M."/>
            <person name="Tobe T."/>
            <person name="Iida T."/>
            <person name="Takami H."/>
            <person name="Honda T."/>
            <person name="Sasakawa C."/>
            <person name="Ogasawara N."/>
            <person name="Yasunaga T."/>
            <person name="Kuhara S."/>
            <person name="Shiba T."/>
            <person name="Hattori M."/>
            <person name="Shinagawa H."/>
        </authorList>
    </citation>
    <scope>NUCLEOTIDE SEQUENCE [LARGE SCALE GENOMIC DNA]</scope>
    <source>
        <strain>O157:H7 / Sakai / RIMD 0509952 / EHEC</strain>
    </source>
</reference>
<gene>
    <name evidence="2" type="primary">rlmD</name>
    <name type="synonym">rumA</name>
    <name type="ordered locus">Z4100</name>
    <name type="ordered locus">ECs3645</name>
</gene>
<evidence type="ECO:0000250" key="1"/>
<evidence type="ECO:0000255" key="2">
    <source>
        <dbReference type="HAMAP-Rule" id="MF_01010"/>
    </source>
</evidence>